<protein>
    <recommendedName>
        <fullName evidence="1">Glycine--tRNA ligase beta subunit</fullName>
        <ecNumber evidence="1">6.1.1.14</ecNumber>
    </recommendedName>
    <alternativeName>
        <fullName evidence="1">Glycyl-tRNA synthetase beta subunit</fullName>
        <shortName evidence="1">GlyRS</shortName>
    </alternativeName>
</protein>
<feature type="chain" id="PRO_1000197206" description="Glycine--tRNA ligase beta subunit">
    <location>
        <begin position="1"/>
        <end position="700"/>
    </location>
</feature>
<keyword id="KW-0030">Aminoacyl-tRNA synthetase</keyword>
<keyword id="KW-0067">ATP-binding</keyword>
<keyword id="KW-0963">Cytoplasm</keyword>
<keyword id="KW-0436">Ligase</keyword>
<keyword id="KW-0547">Nucleotide-binding</keyword>
<keyword id="KW-0648">Protein biosynthesis</keyword>
<keyword id="KW-1185">Reference proteome</keyword>
<proteinExistence type="inferred from homology"/>
<dbReference type="EC" id="6.1.1.14" evidence="1"/>
<dbReference type="EMBL" id="CP000471">
    <property type="protein sequence ID" value="ABK43952.1"/>
    <property type="molecule type" value="Genomic_DNA"/>
</dbReference>
<dbReference type="RefSeq" id="WP_011713105.1">
    <property type="nucleotide sequence ID" value="NC_008576.1"/>
</dbReference>
<dbReference type="SMR" id="A0L7K9"/>
<dbReference type="STRING" id="156889.Mmc1_1441"/>
<dbReference type="KEGG" id="mgm:Mmc1_1441"/>
<dbReference type="eggNOG" id="COG0751">
    <property type="taxonomic scope" value="Bacteria"/>
</dbReference>
<dbReference type="HOGENOM" id="CLU_007220_2_2_5"/>
<dbReference type="OrthoDB" id="9775440at2"/>
<dbReference type="Proteomes" id="UP000002586">
    <property type="component" value="Chromosome"/>
</dbReference>
<dbReference type="GO" id="GO:0005829">
    <property type="term" value="C:cytosol"/>
    <property type="evidence" value="ECO:0007669"/>
    <property type="project" value="TreeGrafter"/>
</dbReference>
<dbReference type="GO" id="GO:0004814">
    <property type="term" value="F:arginine-tRNA ligase activity"/>
    <property type="evidence" value="ECO:0007669"/>
    <property type="project" value="InterPro"/>
</dbReference>
<dbReference type="GO" id="GO:0005524">
    <property type="term" value="F:ATP binding"/>
    <property type="evidence" value="ECO:0007669"/>
    <property type="project" value="UniProtKB-UniRule"/>
</dbReference>
<dbReference type="GO" id="GO:0004820">
    <property type="term" value="F:glycine-tRNA ligase activity"/>
    <property type="evidence" value="ECO:0007669"/>
    <property type="project" value="UniProtKB-UniRule"/>
</dbReference>
<dbReference type="GO" id="GO:0006420">
    <property type="term" value="P:arginyl-tRNA aminoacylation"/>
    <property type="evidence" value="ECO:0007669"/>
    <property type="project" value="InterPro"/>
</dbReference>
<dbReference type="GO" id="GO:0006426">
    <property type="term" value="P:glycyl-tRNA aminoacylation"/>
    <property type="evidence" value="ECO:0007669"/>
    <property type="project" value="UniProtKB-UniRule"/>
</dbReference>
<dbReference type="HAMAP" id="MF_00255">
    <property type="entry name" value="Gly_tRNA_synth_beta"/>
    <property type="match status" value="1"/>
</dbReference>
<dbReference type="InterPro" id="IPR008909">
    <property type="entry name" value="DALR_anticod-bd"/>
</dbReference>
<dbReference type="InterPro" id="IPR015944">
    <property type="entry name" value="Gly-tRNA-synth_bsu"/>
</dbReference>
<dbReference type="InterPro" id="IPR006194">
    <property type="entry name" value="Gly-tRNA-synth_heterodimer"/>
</dbReference>
<dbReference type="NCBIfam" id="TIGR00211">
    <property type="entry name" value="glyS"/>
    <property type="match status" value="1"/>
</dbReference>
<dbReference type="PANTHER" id="PTHR30075:SF2">
    <property type="entry name" value="GLYCINE--TRNA LIGASE, CHLOROPLASTIC_MITOCHONDRIAL 2"/>
    <property type="match status" value="1"/>
</dbReference>
<dbReference type="PANTHER" id="PTHR30075">
    <property type="entry name" value="GLYCYL-TRNA SYNTHETASE"/>
    <property type="match status" value="1"/>
</dbReference>
<dbReference type="Pfam" id="PF05746">
    <property type="entry name" value="DALR_1"/>
    <property type="match status" value="1"/>
</dbReference>
<dbReference type="Pfam" id="PF02092">
    <property type="entry name" value="tRNA_synt_2f"/>
    <property type="match status" value="1"/>
</dbReference>
<dbReference type="PRINTS" id="PR01045">
    <property type="entry name" value="TRNASYNTHGB"/>
</dbReference>
<dbReference type="SUPFAM" id="SSF109604">
    <property type="entry name" value="HD-domain/PDEase-like"/>
    <property type="match status" value="1"/>
</dbReference>
<dbReference type="PROSITE" id="PS50861">
    <property type="entry name" value="AA_TRNA_LIGASE_II_GLYAB"/>
    <property type="match status" value="1"/>
</dbReference>
<gene>
    <name evidence="1" type="primary">glyS</name>
    <name type="ordered locus">Mmc1_1441</name>
</gene>
<accession>A0L7K9</accession>
<organism>
    <name type="scientific">Magnetococcus marinus (strain ATCC BAA-1437 / JCM 17883 / MC-1)</name>
    <dbReference type="NCBI Taxonomy" id="156889"/>
    <lineage>
        <taxon>Bacteria</taxon>
        <taxon>Pseudomonadati</taxon>
        <taxon>Pseudomonadota</taxon>
        <taxon>Alphaproteobacteria</taxon>
        <taxon>Magnetococcales</taxon>
        <taxon>Magnetococcaceae</taxon>
        <taxon>Magnetococcus</taxon>
    </lineage>
</organism>
<evidence type="ECO:0000255" key="1">
    <source>
        <dbReference type="HAMAP-Rule" id="MF_00255"/>
    </source>
</evidence>
<name>SYGB_MAGMM</name>
<sequence length="700" mass="76198">MAEFMWEIGTEEIPARMLPGAITAMGELTRTALQEAGLGFAQVESQGTPRRLLVVVHGLHDKQADVQEERRGPALQAAFDSDGNPTKAAQGFARGCGVDVDQLSRVETPKGTYLSYTLKQAGKGASEVLPGIMQQVFKALPWPKTMRWSDGESRFVRPVQSVTALLNGQQVAVELAENVRYTDAVSGHRFMGKGAVVVQDYASYQQAMADGKVMLKSEDRMATIRAGVLAQAASVGGVVASDEGLVAENASLTEWPVALLGRFDERYLEIPPEVLTTSMRYHQKYFPVLDAQGGLKPHFVVIANMETEDQTVLVRGYQRVLKARLEDAAFFWAEDRKIRLTDRLPDLQAVVWQAKLGSLFQKSQRMAHLASAIAARVAPQQAALAEKAGLYSKCDLVTGMVGEFPELQGIMGGYYLPRERAQDEVVALAIREHYMPAGAGDALPQSLCGRIVSLADKLDTLVGCFGMGITPTGTKDPFGLRRAALGVIRLLLQEQGLRLPLRQLCEEAYRQYGEIGLEMGEAQTVQGVLAFFYGRLQAHLKAEGVDYDLIDAVQGLNLDDLWDAVSRVKALVAFKQDAAYEALVAANKRMANILSKVEDSALDLTLGVDEAVLKASAEQGLAAAVAAVEDRVKTHSSNGRYAEALGELAALRGVIDTFFDEVMVMDEDDAVRHNRLRLLATVLGLFRQVADVSCLVVAEK</sequence>
<comment type="catalytic activity">
    <reaction evidence="1">
        <text>tRNA(Gly) + glycine + ATP = glycyl-tRNA(Gly) + AMP + diphosphate</text>
        <dbReference type="Rhea" id="RHEA:16013"/>
        <dbReference type="Rhea" id="RHEA-COMP:9664"/>
        <dbReference type="Rhea" id="RHEA-COMP:9683"/>
        <dbReference type="ChEBI" id="CHEBI:30616"/>
        <dbReference type="ChEBI" id="CHEBI:33019"/>
        <dbReference type="ChEBI" id="CHEBI:57305"/>
        <dbReference type="ChEBI" id="CHEBI:78442"/>
        <dbReference type="ChEBI" id="CHEBI:78522"/>
        <dbReference type="ChEBI" id="CHEBI:456215"/>
        <dbReference type="EC" id="6.1.1.14"/>
    </reaction>
</comment>
<comment type="subunit">
    <text evidence="1">Tetramer of two alpha and two beta subunits.</text>
</comment>
<comment type="subcellular location">
    <subcellularLocation>
        <location evidence="1">Cytoplasm</location>
    </subcellularLocation>
</comment>
<comment type="similarity">
    <text evidence="1">Belongs to the class-II aminoacyl-tRNA synthetase family.</text>
</comment>
<reference key="1">
    <citation type="journal article" date="2009" name="Appl. Environ. Microbiol.">
        <title>Complete genome sequence of the chemolithoautotrophic marine magnetotactic coccus strain MC-1.</title>
        <authorList>
            <person name="Schubbe S."/>
            <person name="Williams T.J."/>
            <person name="Xie G."/>
            <person name="Kiss H.E."/>
            <person name="Brettin T.S."/>
            <person name="Martinez D."/>
            <person name="Ross C.A."/>
            <person name="Schuler D."/>
            <person name="Cox B.L."/>
            <person name="Nealson K.H."/>
            <person name="Bazylinski D.A."/>
        </authorList>
    </citation>
    <scope>NUCLEOTIDE SEQUENCE [LARGE SCALE GENOMIC DNA]</scope>
    <source>
        <strain>ATCC BAA-1437 / JCM 17883 / MC-1</strain>
    </source>
</reference>